<feature type="chain" id="PRO_0000330679" description="PhoP/PhoQ regulator MgrB">
    <location>
        <begin position="1"/>
        <end position="47"/>
    </location>
</feature>
<feature type="transmembrane region" description="Helical" evidence="1">
    <location>
        <begin position="6"/>
        <end position="26"/>
    </location>
</feature>
<keyword id="KW-0997">Cell inner membrane</keyword>
<keyword id="KW-1003">Cell membrane</keyword>
<keyword id="KW-0472">Membrane</keyword>
<keyword id="KW-0812">Transmembrane</keyword>
<keyword id="KW-1133">Transmembrane helix</keyword>
<sequence length="47" mass="5520">MKKFRWVVLGIVVVVCLLLWAQVFNIMCDQDVQFFSGICAINKFIPW</sequence>
<comment type="function">
    <text evidence="1">PhoP-regulated transcription is redox-sensitive, being activated when the periplasm becomes more reducing. MgrB acts between DsbA/DsbB and PhoP/PhoQ in this pathway. Represses PhoP/PhoQ signaling, possibly by binding to the periplasmic domain of PhoQ, altering its activity and that of downstream effector PhoP.</text>
</comment>
<comment type="subunit">
    <text evidence="1">May form homooligomers. Probably interacts with the periplasmic domain of PhoQ.</text>
</comment>
<comment type="subcellular location">
    <subcellularLocation>
        <location evidence="1">Cell inner membrane</location>
        <topology evidence="1">Single-pass membrane protein</topology>
    </subcellularLocation>
</comment>
<comment type="similarity">
    <text evidence="1">Belongs to the MgrB family.</text>
</comment>
<gene>
    <name evidence="1" type="primary">mgrB</name>
    <name type="ordered locus">STY1970</name>
    <name type="ordered locus">t1038</name>
</gene>
<proteinExistence type="inferred from homology"/>
<reference key="1">
    <citation type="journal article" date="2001" name="Nature">
        <title>Complete genome sequence of a multiple drug resistant Salmonella enterica serovar Typhi CT18.</title>
        <authorList>
            <person name="Parkhill J."/>
            <person name="Dougan G."/>
            <person name="James K.D."/>
            <person name="Thomson N.R."/>
            <person name="Pickard D."/>
            <person name="Wain J."/>
            <person name="Churcher C.M."/>
            <person name="Mungall K.L."/>
            <person name="Bentley S.D."/>
            <person name="Holden M.T.G."/>
            <person name="Sebaihia M."/>
            <person name="Baker S."/>
            <person name="Basham D."/>
            <person name="Brooks K."/>
            <person name="Chillingworth T."/>
            <person name="Connerton P."/>
            <person name="Cronin A."/>
            <person name="Davis P."/>
            <person name="Davies R.M."/>
            <person name="Dowd L."/>
            <person name="White N."/>
            <person name="Farrar J."/>
            <person name="Feltwell T."/>
            <person name="Hamlin N."/>
            <person name="Haque A."/>
            <person name="Hien T.T."/>
            <person name="Holroyd S."/>
            <person name="Jagels K."/>
            <person name="Krogh A."/>
            <person name="Larsen T.S."/>
            <person name="Leather S."/>
            <person name="Moule S."/>
            <person name="O'Gaora P."/>
            <person name="Parry C."/>
            <person name="Quail M.A."/>
            <person name="Rutherford K.M."/>
            <person name="Simmonds M."/>
            <person name="Skelton J."/>
            <person name="Stevens K."/>
            <person name="Whitehead S."/>
            <person name="Barrell B.G."/>
        </authorList>
    </citation>
    <scope>NUCLEOTIDE SEQUENCE [LARGE SCALE GENOMIC DNA]</scope>
    <source>
        <strain>CT18</strain>
    </source>
</reference>
<reference key="2">
    <citation type="journal article" date="2003" name="J. Bacteriol.">
        <title>Comparative genomics of Salmonella enterica serovar Typhi strains Ty2 and CT18.</title>
        <authorList>
            <person name="Deng W."/>
            <person name="Liou S.-R."/>
            <person name="Plunkett G. III"/>
            <person name="Mayhew G.F."/>
            <person name="Rose D.J."/>
            <person name="Burland V."/>
            <person name="Kodoyianni V."/>
            <person name="Schwartz D.C."/>
            <person name="Blattner F.R."/>
        </authorList>
    </citation>
    <scope>NUCLEOTIDE SEQUENCE [LARGE SCALE GENOMIC DNA]</scope>
    <source>
        <strain>ATCC 700931 / Ty2</strain>
    </source>
</reference>
<protein>
    <recommendedName>
        <fullName evidence="1">PhoP/PhoQ regulator MgrB</fullName>
    </recommendedName>
</protein>
<accession>Q8XG71</accession>
<accession>Q7AMT9</accession>
<name>MGRB_SALTI</name>
<evidence type="ECO:0000255" key="1">
    <source>
        <dbReference type="HAMAP-Rule" id="MF_01596"/>
    </source>
</evidence>
<organism>
    <name type="scientific">Salmonella typhi</name>
    <dbReference type="NCBI Taxonomy" id="90370"/>
    <lineage>
        <taxon>Bacteria</taxon>
        <taxon>Pseudomonadati</taxon>
        <taxon>Pseudomonadota</taxon>
        <taxon>Gammaproteobacteria</taxon>
        <taxon>Enterobacterales</taxon>
        <taxon>Enterobacteriaceae</taxon>
        <taxon>Salmonella</taxon>
    </lineage>
</organism>
<dbReference type="EMBL" id="AL513382">
    <property type="protein sequence ID" value="CAD05522.1"/>
    <property type="molecule type" value="Genomic_DNA"/>
</dbReference>
<dbReference type="EMBL" id="AE014613">
    <property type="protein sequence ID" value="AAO68704.1"/>
    <property type="molecule type" value="Genomic_DNA"/>
</dbReference>
<dbReference type="RefSeq" id="NP_456346.1">
    <property type="nucleotide sequence ID" value="NC_003198.1"/>
</dbReference>
<dbReference type="RefSeq" id="WP_000714547.1">
    <property type="nucleotide sequence ID" value="NZ_WSUR01000004.1"/>
</dbReference>
<dbReference type="STRING" id="220341.gene:17585887"/>
<dbReference type="GeneID" id="66756315"/>
<dbReference type="KEGG" id="stt:t1038"/>
<dbReference type="KEGG" id="sty:STY1970"/>
<dbReference type="PATRIC" id="fig|220341.7.peg.1987"/>
<dbReference type="eggNOG" id="ENOG50333DF">
    <property type="taxonomic scope" value="Bacteria"/>
</dbReference>
<dbReference type="HOGENOM" id="CLU_208030_1_0_6"/>
<dbReference type="Proteomes" id="UP000000541">
    <property type="component" value="Chromosome"/>
</dbReference>
<dbReference type="Proteomes" id="UP000002670">
    <property type="component" value="Chromosome"/>
</dbReference>
<dbReference type="GO" id="GO:0005886">
    <property type="term" value="C:plasma membrane"/>
    <property type="evidence" value="ECO:0007669"/>
    <property type="project" value="UniProtKB-SubCell"/>
</dbReference>
<dbReference type="GO" id="GO:0070298">
    <property type="term" value="P:negative regulation of phosphorelay signal transduction system"/>
    <property type="evidence" value="ECO:0007669"/>
    <property type="project" value="UniProtKB-UniRule"/>
</dbReference>
<dbReference type="HAMAP" id="MF_01596">
    <property type="entry name" value="MgrB"/>
    <property type="match status" value="1"/>
</dbReference>
<dbReference type="InterPro" id="IPR020907">
    <property type="entry name" value="MgrB"/>
</dbReference>
<dbReference type="NCBIfam" id="NF007635">
    <property type="entry name" value="PRK10299.1"/>
    <property type="match status" value="1"/>
</dbReference>
<dbReference type="Pfam" id="PF13998">
    <property type="entry name" value="MgrB"/>
    <property type="match status" value="1"/>
</dbReference>